<proteinExistence type="inferred from homology"/>
<sequence length="90" mass="9732">MCIGVPGQIRTIDGNQAKVDVCGIQRDVDLTLVGSCDENGQPRVGQWVLVHVGFAMSVINEAEARDTLDALQNMFDVEPDVGALLYGEEK</sequence>
<keyword id="KW-1185">Reference proteome</keyword>
<gene>
    <name type="primary">hypC</name>
    <name type="ordered locus">c3288</name>
</gene>
<accession>P0AAM4</accession>
<accession>P24191</accession>
<comment type="function">
    <text evidence="1">Involved in the maturation of [NiFe] hydrogenases. Involved in the biosynthesis of the Fe(CN)(2)CO cofactor. HypC delivers iron-bound CO(2) to HypD where reduction to CO probably occurs. In complex with HypD, accepts the cyanide ligand generated by HypF and HypE, and also coordinates the carbon monoxide ligand.</text>
</comment>
<comment type="pathway">
    <text evidence="1">Protein modification; [NiFe] hydrogenase maturation.</text>
</comment>
<comment type="similarity">
    <text evidence="2">Belongs to the HupF/HypC family.</text>
</comment>
<organism>
    <name type="scientific">Escherichia coli O6:H1 (strain CFT073 / ATCC 700928 / UPEC)</name>
    <dbReference type="NCBI Taxonomy" id="199310"/>
    <lineage>
        <taxon>Bacteria</taxon>
        <taxon>Pseudomonadati</taxon>
        <taxon>Pseudomonadota</taxon>
        <taxon>Gammaproteobacteria</taxon>
        <taxon>Enterobacterales</taxon>
        <taxon>Enterobacteriaceae</taxon>
        <taxon>Escherichia</taxon>
    </lineage>
</organism>
<dbReference type="EMBL" id="AE014075">
    <property type="protein sequence ID" value="AAN81737.1"/>
    <property type="molecule type" value="Genomic_DNA"/>
</dbReference>
<dbReference type="RefSeq" id="WP_000334881.1">
    <property type="nucleotide sequence ID" value="NZ_CP051263.1"/>
</dbReference>
<dbReference type="BMRB" id="P0AAM4"/>
<dbReference type="SMR" id="P0AAM4"/>
<dbReference type="STRING" id="199310.c3288"/>
<dbReference type="GeneID" id="93779280"/>
<dbReference type="KEGG" id="ecc:c3288"/>
<dbReference type="eggNOG" id="COG0298">
    <property type="taxonomic scope" value="Bacteria"/>
</dbReference>
<dbReference type="HOGENOM" id="CLU_159381_1_1_6"/>
<dbReference type="BioCyc" id="ECOL199310:C3288-MONOMER"/>
<dbReference type="UniPathway" id="UPA00335"/>
<dbReference type="Proteomes" id="UP000001410">
    <property type="component" value="Chromosome"/>
</dbReference>
<dbReference type="GO" id="GO:1902670">
    <property type="term" value="F:carbon dioxide binding"/>
    <property type="evidence" value="ECO:0007669"/>
    <property type="project" value="TreeGrafter"/>
</dbReference>
<dbReference type="GO" id="GO:0005506">
    <property type="term" value="F:iron ion binding"/>
    <property type="evidence" value="ECO:0007669"/>
    <property type="project" value="TreeGrafter"/>
</dbReference>
<dbReference type="GO" id="GO:0051604">
    <property type="term" value="P:protein maturation"/>
    <property type="evidence" value="ECO:0007669"/>
    <property type="project" value="TreeGrafter"/>
</dbReference>
<dbReference type="FunFam" id="2.30.30.140:FF:000023">
    <property type="entry name" value="Hydrogenase assembly chaperone protein HypC"/>
    <property type="match status" value="1"/>
</dbReference>
<dbReference type="Gene3D" id="2.30.30.140">
    <property type="match status" value="1"/>
</dbReference>
<dbReference type="Gene3D" id="6.10.250.910">
    <property type="match status" value="1"/>
</dbReference>
<dbReference type="InterPro" id="IPR019812">
    <property type="entry name" value="Hydgase_assmbl_chp_CS"/>
</dbReference>
<dbReference type="InterPro" id="IPR001109">
    <property type="entry name" value="Hydrogenase_HupF/HypC"/>
</dbReference>
<dbReference type="NCBIfam" id="TIGR00074">
    <property type="entry name" value="hypC_hupF"/>
    <property type="match status" value="1"/>
</dbReference>
<dbReference type="NCBIfam" id="NF007712">
    <property type="entry name" value="PRK10409.1"/>
    <property type="match status" value="1"/>
</dbReference>
<dbReference type="PANTHER" id="PTHR35177">
    <property type="entry name" value="HYDROGENASE MATURATION FACTOR HYBG"/>
    <property type="match status" value="1"/>
</dbReference>
<dbReference type="PANTHER" id="PTHR35177:SF1">
    <property type="entry name" value="HYDROGENASE MATURATION FACTOR HYPC"/>
    <property type="match status" value="1"/>
</dbReference>
<dbReference type="Pfam" id="PF01455">
    <property type="entry name" value="HupF_HypC"/>
    <property type="match status" value="1"/>
</dbReference>
<dbReference type="PRINTS" id="PR00445">
    <property type="entry name" value="HUPFHYPC"/>
</dbReference>
<dbReference type="SUPFAM" id="SSF159127">
    <property type="entry name" value="HupF/HypC-like"/>
    <property type="match status" value="1"/>
</dbReference>
<dbReference type="PROSITE" id="PS01097">
    <property type="entry name" value="HUPF_HYPC"/>
    <property type="match status" value="1"/>
</dbReference>
<protein>
    <recommendedName>
        <fullName evidence="1">Hydrogenase maturation factor HypC</fullName>
    </recommendedName>
</protein>
<name>HYPC_ECOL6</name>
<reference key="1">
    <citation type="journal article" date="2002" name="Proc. Natl. Acad. Sci. U.S.A.">
        <title>Extensive mosaic structure revealed by the complete genome sequence of uropathogenic Escherichia coli.</title>
        <authorList>
            <person name="Welch R.A."/>
            <person name="Burland V."/>
            <person name="Plunkett G. III"/>
            <person name="Redford P."/>
            <person name="Roesch P."/>
            <person name="Rasko D."/>
            <person name="Buckles E.L."/>
            <person name="Liou S.-R."/>
            <person name="Boutin A."/>
            <person name="Hackett J."/>
            <person name="Stroud D."/>
            <person name="Mayhew G.F."/>
            <person name="Rose D.J."/>
            <person name="Zhou S."/>
            <person name="Schwartz D.C."/>
            <person name="Perna N.T."/>
            <person name="Mobley H.L.T."/>
            <person name="Donnenberg M.S."/>
            <person name="Blattner F.R."/>
        </authorList>
    </citation>
    <scope>NUCLEOTIDE SEQUENCE [LARGE SCALE GENOMIC DNA]</scope>
    <source>
        <strain>CFT073 / ATCC 700928 / UPEC</strain>
    </source>
</reference>
<feature type="chain" id="PRO_0000201400" description="Hydrogenase maturation factor HypC">
    <location>
        <begin position="1"/>
        <end position="90"/>
    </location>
</feature>
<feature type="site" description="Important for interaction with HypD and the precursor form of hydrogenase" evidence="1">
    <location>
        <position position="2"/>
    </location>
</feature>
<evidence type="ECO:0000250" key="1">
    <source>
        <dbReference type="UniProtKB" id="P0AAM3"/>
    </source>
</evidence>
<evidence type="ECO:0000305" key="2"/>